<proteinExistence type="inferred from homology"/>
<organism>
    <name type="scientific">Shewanella sp. (strain MR-7)</name>
    <dbReference type="NCBI Taxonomy" id="60481"/>
    <lineage>
        <taxon>Bacteria</taxon>
        <taxon>Pseudomonadati</taxon>
        <taxon>Pseudomonadota</taxon>
        <taxon>Gammaproteobacteria</taxon>
        <taxon>Alteromonadales</taxon>
        <taxon>Shewanellaceae</taxon>
        <taxon>Shewanella</taxon>
    </lineage>
</organism>
<reference key="1">
    <citation type="submission" date="2006-08" db="EMBL/GenBank/DDBJ databases">
        <title>Complete sequence of chromosome 1 of Shewanella sp. MR-7.</title>
        <authorList>
            <person name="Copeland A."/>
            <person name="Lucas S."/>
            <person name="Lapidus A."/>
            <person name="Barry K."/>
            <person name="Detter J.C."/>
            <person name="Glavina del Rio T."/>
            <person name="Hammon N."/>
            <person name="Israni S."/>
            <person name="Dalin E."/>
            <person name="Tice H."/>
            <person name="Pitluck S."/>
            <person name="Kiss H."/>
            <person name="Brettin T."/>
            <person name="Bruce D."/>
            <person name="Han C."/>
            <person name="Tapia R."/>
            <person name="Gilna P."/>
            <person name="Schmutz J."/>
            <person name="Larimer F."/>
            <person name="Land M."/>
            <person name="Hauser L."/>
            <person name="Kyrpides N."/>
            <person name="Mikhailova N."/>
            <person name="Nealson K."/>
            <person name="Konstantinidis K."/>
            <person name="Klappenbach J."/>
            <person name="Tiedje J."/>
            <person name="Richardson P."/>
        </authorList>
    </citation>
    <scope>NUCLEOTIDE SEQUENCE [LARGE SCALE GENOMIC DNA]</scope>
    <source>
        <strain>MR-7</strain>
    </source>
</reference>
<dbReference type="EMBL" id="CP000444">
    <property type="protein sequence ID" value="ABI42815.1"/>
    <property type="molecule type" value="Genomic_DNA"/>
</dbReference>
<dbReference type="SMR" id="Q0HVP0"/>
<dbReference type="KEGG" id="shm:Shewmr7_1823"/>
<dbReference type="HOGENOM" id="CLU_005965_2_1_6"/>
<dbReference type="GO" id="GO:0005524">
    <property type="term" value="F:ATP binding"/>
    <property type="evidence" value="ECO:0007669"/>
    <property type="project" value="UniProtKB-KW"/>
</dbReference>
<dbReference type="GO" id="GO:0016887">
    <property type="term" value="F:ATP hydrolysis activity"/>
    <property type="evidence" value="ECO:0007669"/>
    <property type="project" value="UniProtKB-UniRule"/>
</dbReference>
<dbReference type="GO" id="GO:0140662">
    <property type="term" value="F:ATP-dependent protein folding chaperone"/>
    <property type="evidence" value="ECO:0007669"/>
    <property type="project" value="InterPro"/>
</dbReference>
<dbReference type="GO" id="GO:0051082">
    <property type="term" value="F:unfolded protein binding"/>
    <property type="evidence" value="ECO:0007669"/>
    <property type="project" value="InterPro"/>
</dbReference>
<dbReference type="GO" id="GO:0016226">
    <property type="term" value="P:iron-sulfur cluster assembly"/>
    <property type="evidence" value="ECO:0007669"/>
    <property type="project" value="InterPro"/>
</dbReference>
<dbReference type="FunFam" id="3.30.420.40:FF:000046">
    <property type="entry name" value="Chaperone protein HscA"/>
    <property type="match status" value="1"/>
</dbReference>
<dbReference type="FunFam" id="2.60.34.10:FF:000005">
    <property type="entry name" value="Chaperone protein HscA homolog"/>
    <property type="match status" value="1"/>
</dbReference>
<dbReference type="Gene3D" id="1.20.1270.10">
    <property type="match status" value="1"/>
</dbReference>
<dbReference type="Gene3D" id="3.30.420.40">
    <property type="match status" value="2"/>
</dbReference>
<dbReference type="Gene3D" id="3.90.640.10">
    <property type="entry name" value="Actin, Chain A, domain 4"/>
    <property type="match status" value="1"/>
</dbReference>
<dbReference type="Gene3D" id="2.60.34.10">
    <property type="entry name" value="Substrate Binding Domain Of DNAk, Chain A, domain 1"/>
    <property type="match status" value="1"/>
</dbReference>
<dbReference type="HAMAP" id="MF_00679">
    <property type="entry name" value="HscA"/>
    <property type="match status" value="1"/>
</dbReference>
<dbReference type="InterPro" id="IPR043129">
    <property type="entry name" value="ATPase_NBD"/>
</dbReference>
<dbReference type="InterPro" id="IPR018181">
    <property type="entry name" value="Heat_shock_70_CS"/>
</dbReference>
<dbReference type="InterPro" id="IPR029048">
    <property type="entry name" value="HSP70_C_sf"/>
</dbReference>
<dbReference type="InterPro" id="IPR029047">
    <property type="entry name" value="HSP70_peptide-bd_sf"/>
</dbReference>
<dbReference type="InterPro" id="IPR013126">
    <property type="entry name" value="Hsp_70_fam"/>
</dbReference>
<dbReference type="InterPro" id="IPR010236">
    <property type="entry name" value="ISC_FeS_clus_asmbl_HscA"/>
</dbReference>
<dbReference type="NCBIfam" id="TIGR01991">
    <property type="entry name" value="HscA"/>
    <property type="match status" value="1"/>
</dbReference>
<dbReference type="NCBIfam" id="NF003520">
    <property type="entry name" value="PRK05183.1"/>
    <property type="match status" value="1"/>
</dbReference>
<dbReference type="PANTHER" id="PTHR19375">
    <property type="entry name" value="HEAT SHOCK PROTEIN 70KDA"/>
    <property type="match status" value="1"/>
</dbReference>
<dbReference type="Pfam" id="PF00012">
    <property type="entry name" value="HSP70"/>
    <property type="match status" value="1"/>
</dbReference>
<dbReference type="PRINTS" id="PR00301">
    <property type="entry name" value="HEATSHOCK70"/>
</dbReference>
<dbReference type="SUPFAM" id="SSF53067">
    <property type="entry name" value="Actin-like ATPase domain"/>
    <property type="match status" value="2"/>
</dbReference>
<dbReference type="SUPFAM" id="SSF100934">
    <property type="entry name" value="Heat shock protein 70kD (HSP70), C-terminal subdomain"/>
    <property type="match status" value="1"/>
</dbReference>
<dbReference type="SUPFAM" id="SSF100920">
    <property type="entry name" value="Heat shock protein 70kD (HSP70), peptide-binding domain"/>
    <property type="match status" value="1"/>
</dbReference>
<dbReference type="PROSITE" id="PS00297">
    <property type="entry name" value="HSP70_1"/>
    <property type="match status" value="1"/>
</dbReference>
<dbReference type="PROSITE" id="PS00329">
    <property type="entry name" value="HSP70_2"/>
    <property type="match status" value="1"/>
</dbReference>
<comment type="function">
    <text evidence="1">Chaperone involved in the maturation of iron-sulfur cluster-containing proteins. Has a low intrinsic ATPase activity which is markedly stimulated by HscB.</text>
</comment>
<comment type="similarity">
    <text evidence="1">Belongs to the heat shock protein 70 family.</text>
</comment>
<name>HSCA_SHESR</name>
<keyword id="KW-0067">ATP-binding</keyword>
<keyword id="KW-0143">Chaperone</keyword>
<keyword id="KW-0547">Nucleotide-binding</keyword>
<gene>
    <name evidence="1" type="primary">hscA</name>
    <name type="ordered locus">Shewmr7_1823</name>
</gene>
<sequence length="620" mass="66465">MALLQIAEPGQSAAPHQHRLAVGIDLGTTNSLVAAVRSGVTATLPDENGQHSLPSIVRYTQDGIEVGQVAALSSAQDPKNTIVSVKRFMGRSLTDIQSGEQIFPYQFEASENGLPLFVTPQGQVNPVQVSAEILRPLVERAEKTLGGELQGVVITVPAYFDDAQRQGTKDAASLLGVKVLRLLNEPTAAAIAYGLDSKQEGVIAIYDLGGGTFDISILRLNRGVFEVLATGGDSALGGDDFDHLLQAHMQQVWQLTNLDPQLSRQLLIEARRVKEALTDASEVEASLTLADGTVLKQVVTKAEFDNLISALVKKTIASCRRTLRDAGVTADEVLETVMVGGSTRVPLVREQVEAFFGKAPLTSIDPDRVVAIGAAIQADILVGNKPESELLLLDVIPLSLGIETMGGLVEKVVSRNTTIPVARAQEFTTFKDGQTAMAFHVVQGERELVDDCRSLARFTLKGIPPLAAGAAHIRVTFQVDADGLLSVTAMEKSTGVQSSIQVKPSFGLSDTEIATMLKDSMKHAKEDISRRMLAEQQVEAARVLESLNAALAKDGDLLTSDERQQIDAVMAKLAEIARGDDADAIKQAIEVLDEHTQDFAAKRMDNSIRVAFKGQSIDNI</sequence>
<feature type="chain" id="PRO_1000044893" description="Chaperone protein HscA homolog">
    <location>
        <begin position="1"/>
        <end position="620"/>
    </location>
</feature>
<evidence type="ECO:0000255" key="1">
    <source>
        <dbReference type="HAMAP-Rule" id="MF_00679"/>
    </source>
</evidence>
<accession>Q0HVP0</accession>
<protein>
    <recommendedName>
        <fullName evidence="1">Chaperone protein HscA homolog</fullName>
    </recommendedName>
</protein>